<organism>
    <name type="scientific">Mus musculus</name>
    <name type="common">Mouse</name>
    <dbReference type="NCBI Taxonomy" id="10090"/>
    <lineage>
        <taxon>Eukaryota</taxon>
        <taxon>Metazoa</taxon>
        <taxon>Chordata</taxon>
        <taxon>Craniata</taxon>
        <taxon>Vertebrata</taxon>
        <taxon>Euteleostomi</taxon>
        <taxon>Mammalia</taxon>
        <taxon>Eutheria</taxon>
        <taxon>Euarchontoglires</taxon>
        <taxon>Glires</taxon>
        <taxon>Rodentia</taxon>
        <taxon>Myomorpha</taxon>
        <taxon>Muroidea</taxon>
        <taxon>Muridae</taxon>
        <taxon>Murinae</taxon>
        <taxon>Mus</taxon>
        <taxon>Mus</taxon>
    </lineage>
</organism>
<dbReference type="EMBL" id="AF252291">
    <property type="protein sequence ID" value="AAF71528.1"/>
    <property type="molecule type" value="mRNA"/>
</dbReference>
<dbReference type="EMBL" id="AL831766">
    <property type="status" value="NOT_ANNOTATED_CDS"/>
    <property type="molecule type" value="Genomic_DNA"/>
</dbReference>
<dbReference type="EMBL" id="CH466551">
    <property type="protein sequence ID" value="EDL06536.1"/>
    <property type="molecule type" value="Genomic_DNA"/>
</dbReference>
<dbReference type="EMBL" id="BC025147">
    <property type="protein sequence ID" value="AAH25147.1"/>
    <property type="molecule type" value="mRNA"/>
</dbReference>
<dbReference type="CCDS" id="CCDS17108.1">
    <molecule id="Q9JK83-1"/>
</dbReference>
<dbReference type="RefSeq" id="NP_067384.2">
    <molecule id="Q9JK83-1"/>
    <property type="nucleotide sequence ID" value="NM_021409.2"/>
</dbReference>
<dbReference type="PDB" id="1NF3">
    <property type="method" value="X-ray"/>
    <property type="resolution" value="2.10 A"/>
    <property type="chains" value="C/D=126-253"/>
</dbReference>
<dbReference type="PDB" id="6JUE">
    <property type="method" value="X-ray"/>
    <property type="resolution" value="1.55 A"/>
    <property type="chains" value="A=362-371"/>
</dbReference>
<dbReference type="PDBsum" id="1NF3"/>
<dbReference type="PDBsum" id="6JUE"/>
<dbReference type="SMR" id="Q9JK83"/>
<dbReference type="BioGRID" id="208398">
    <property type="interactions" value="12"/>
</dbReference>
<dbReference type="CORUM" id="Q9JK83"/>
<dbReference type="FunCoup" id="Q9JK83">
    <property type="interactions" value="2345"/>
</dbReference>
<dbReference type="IntAct" id="Q9JK83">
    <property type="interactions" value="15"/>
</dbReference>
<dbReference type="STRING" id="10090.ENSMUSP00000052619"/>
<dbReference type="iPTMnet" id="Q9JK83"/>
<dbReference type="PhosphoSitePlus" id="Q9JK83"/>
<dbReference type="PaxDb" id="10090-ENSMUSP00000052619"/>
<dbReference type="PeptideAtlas" id="Q9JK83"/>
<dbReference type="ProteomicsDB" id="288061">
    <molecule id="Q9JK83-1"/>
</dbReference>
<dbReference type="ProteomicsDB" id="288062">
    <molecule id="Q9JK83-2"/>
</dbReference>
<dbReference type="Antibodypedia" id="2853">
    <property type="antibodies" value="164 antibodies from 30 providers"/>
</dbReference>
<dbReference type="DNASU" id="58220"/>
<dbReference type="Ensembl" id="ENSMUST00000052125.7">
    <molecule id="Q9JK83-1"/>
    <property type="protein sequence ID" value="ENSMUSP00000052619.7"/>
    <property type="gene ID" value="ENSMUSG00000044641.8"/>
</dbReference>
<dbReference type="GeneID" id="58220"/>
<dbReference type="KEGG" id="mmu:58220"/>
<dbReference type="UCSC" id="uc008oao.2">
    <molecule id="Q9JK83-1"/>
    <property type="organism name" value="mouse"/>
</dbReference>
<dbReference type="AGR" id="MGI:2135605"/>
<dbReference type="CTD" id="84612"/>
<dbReference type="MGI" id="MGI:2135605">
    <property type="gene designation" value="Pard6b"/>
</dbReference>
<dbReference type="VEuPathDB" id="HostDB:ENSMUSG00000044641"/>
<dbReference type="eggNOG" id="KOG3606">
    <property type="taxonomic scope" value="Eukaryota"/>
</dbReference>
<dbReference type="GeneTree" id="ENSGT00950000183211"/>
<dbReference type="HOGENOM" id="CLU_040653_2_0_1"/>
<dbReference type="InParanoid" id="Q9JK83"/>
<dbReference type="OMA" id="PGYPQQI"/>
<dbReference type="OrthoDB" id="5868434at2759"/>
<dbReference type="PhylomeDB" id="Q9JK83"/>
<dbReference type="TreeFam" id="TF312899"/>
<dbReference type="Reactome" id="R-MMU-420029">
    <property type="pathway name" value="Tight junction interactions"/>
</dbReference>
<dbReference type="Reactome" id="R-MMU-9013424">
    <property type="pathway name" value="RHOV GTPase cycle"/>
</dbReference>
<dbReference type="BioGRID-ORCS" id="58220">
    <property type="hits" value="2 hits in 76 CRISPR screens"/>
</dbReference>
<dbReference type="CD-CODE" id="296927EE">
    <property type="entry name" value="Par complex"/>
</dbReference>
<dbReference type="ChiTaRS" id="Pard6b">
    <property type="organism name" value="mouse"/>
</dbReference>
<dbReference type="EvolutionaryTrace" id="Q9JK83"/>
<dbReference type="PRO" id="PR:Q9JK83"/>
<dbReference type="Proteomes" id="UP000000589">
    <property type="component" value="Chromosome 2"/>
</dbReference>
<dbReference type="RNAct" id="Q9JK83">
    <property type="molecule type" value="protein"/>
</dbReference>
<dbReference type="Bgee" id="ENSMUSG00000044641">
    <property type="expression patterns" value="Expressed in secondary oocyte and 161 other cell types or tissues"/>
</dbReference>
<dbReference type="GO" id="GO:0045177">
    <property type="term" value="C:apical part of cell"/>
    <property type="evidence" value="ECO:0000314"/>
    <property type="project" value="MGI"/>
</dbReference>
<dbReference type="GO" id="GO:0016324">
    <property type="term" value="C:apical plasma membrane"/>
    <property type="evidence" value="ECO:0000314"/>
    <property type="project" value="MGI"/>
</dbReference>
<dbReference type="GO" id="GO:0005923">
    <property type="term" value="C:bicellular tight junction"/>
    <property type="evidence" value="ECO:0000314"/>
    <property type="project" value="MGI"/>
</dbReference>
<dbReference type="GO" id="GO:0005938">
    <property type="term" value="C:cell cortex"/>
    <property type="evidence" value="ECO:0000314"/>
    <property type="project" value="MGI"/>
</dbReference>
<dbReference type="GO" id="GO:0005829">
    <property type="term" value="C:cytosol"/>
    <property type="evidence" value="ECO:0007669"/>
    <property type="project" value="Ensembl"/>
</dbReference>
<dbReference type="GO" id="GO:0005634">
    <property type="term" value="C:nucleus"/>
    <property type="evidence" value="ECO:0000314"/>
    <property type="project" value="MGI"/>
</dbReference>
<dbReference type="GO" id="GO:0005886">
    <property type="term" value="C:plasma membrane"/>
    <property type="evidence" value="ECO:0000250"/>
    <property type="project" value="UniProtKB"/>
</dbReference>
<dbReference type="GO" id="GO:0032991">
    <property type="term" value="C:protein-containing complex"/>
    <property type="evidence" value="ECO:0007669"/>
    <property type="project" value="Ensembl"/>
</dbReference>
<dbReference type="GO" id="GO:0051301">
    <property type="term" value="P:cell division"/>
    <property type="evidence" value="ECO:0007669"/>
    <property type="project" value="UniProtKB-KW"/>
</dbReference>
<dbReference type="GO" id="GO:0065003">
    <property type="term" value="P:protein-containing complex assembly"/>
    <property type="evidence" value="ECO:0000250"/>
    <property type="project" value="UniProtKB"/>
</dbReference>
<dbReference type="CDD" id="cd06403">
    <property type="entry name" value="PB1_Par6"/>
    <property type="match status" value="1"/>
</dbReference>
<dbReference type="CDD" id="cd06718">
    <property type="entry name" value="PDZ_Par6-like"/>
    <property type="match status" value="1"/>
</dbReference>
<dbReference type="FunFam" id="3.10.20.90:FF:000031">
    <property type="entry name" value="Partitioning defective 6 homolog alpha"/>
    <property type="match status" value="1"/>
</dbReference>
<dbReference type="FunFam" id="2.30.42.10:FF:000030">
    <property type="entry name" value="Partitioning defective 6 homolog beta"/>
    <property type="match status" value="1"/>
</dbReference>
<dbReference type="Gene3D" id="2.30.42.10">
    <property type="match status" value="1"/>
</dbReference>
<dbReference type="Gene3D" id="3.10.20.90">
    <property type="entry name" value="Phosphatidylinositol 3-kinase Catalytic Subunit, Chain A, domain 1"/>
    <property type="match status" value="1"/>
</dbReference>
<dbReference type="IDEAL" id="IID50101"/>
<dbReference type="InterPro" id="IPR051741">
    <property type="entry name" value="PAR6_homolog"/>
</dbReference>
<dbReference type="InterPro" id="IPR053793">
    <property type="entry name" value="PB1-like"/>
</dbReference>
<dbReference type="InterPro" id="IPR000270">
    <property type="entry name" value="PB1_dom"/>
</dbReference>
<dbReference type="InterPro" id="IPR034868">
    <property type="entry name" value="PB1_Par6"/>
</dbReference>
<dbReference type="InterPro" id="IPR001478">
    <property type="entry name" value="PDZ"/>
</dbReference>
<dbReference type="InterPro" id="IPR036034">
    <property type="entry name" value="PDZ_sf"/>
</dbReference>
<dbReference type="PANTHER" id="PTHR14102">
    <property type="entry name" value="PAR-6-RELATED"/>
    <property type="match status" value="1"/>
</dbReference>
<dbReference type="PANTHER" id="PTHR14102:SF4">
    <property type="entry name" value="PARTITIONING DEFECTIVE 6 HOMOLOG BETA"/>
    <property type="match status" value="1"/>
</dbReference>
<dbReference type="Pfam" id="PF00564">
    <property type="entry name" value="PB1"/>
    <property type="match status" value="1"/>
</dbReference>
<dbReference type="Pfam" id="PF00595">
    <property type="entry name" value="PDZ"/>
    <property type="match status" value="1"/>
</dbReference>
<dbReference type="SMART" id="SM00666">
    <property type="entry name" value="PB1"/>
    <property type="match status" value="1"/>
</dbReference>
<dbReference type="SMART" id="SM00228">
    <property type="entry name" value="PDZ"/>
    <property type="match status" value="1"/>
</dbReference>
<dbReference type="SUPFAM" id="SSF54277">
    <property type="entry name" value="CAD &amp; PB1 domains"/>
    <property type="match status" value="1"/>
</dbReference>
<dbReference type="SUPFAM" id="SSF50156">
    <property type="entry name" value="PDZ domain-like"/>
    <property type="match status" value="1"/>
</dbReference>
<dbReference type="PROSITE" id="PS51745">
    <property type="entry name" value="PB1"/>
    <property type="match status" value="1"/>
</dbReference>
<dbReference type="PROSITE" id="PS50106">
    <property type="entry name" value="PDZ"/>
    <property type="match status" value="1"/>
</dbReference>
<protein>
    <recommendedName>
        <fullName>Partitioning defective 6 homolog beta</fullName>
        <shortName>PAR-6 beta</shortName>
        <shortName>PAR-6B</shortName>
    </recommendedName>
</protein>
<accession>Q9JK83</accession>
<accession>A2ANX8</accession>
<accession>Q8R3J8</accession>
<feature type="chain" id="PRO_0000112517" description="Partitioning defective 6 homolog beta">
    <location>
        <begin position="1"/>
        <end position="371"/>
    </location>
</feature>
<feature type="domain" description="PB1" evidence="3">
    <location>
        <begin position="16"/>
        <end position="96"/>
    </location>
</feature>
<feature type="domain" description="Pseudo-CRIB">
    <location>
        <begin position="133"/>
        <end position="150"/>
    </location>
</feature>
<feature type="domain" description="PDZ" evidence="2">
    <location>
        <begin position="157"/>
        <end position="250"/>
    </location>
</feature>
<feature type="region of interest" description="Interaction with PARD3 and CDC42" evidence="5">
    <location>
        <begin position="126"/>
        <end position="253"/>
    </location>
</feature>
<feature type="region of interest" description="Disordered" evidence="4">
    <location>
        <begin position="253"/>
        <end position="273"/>
    </location>
</feature>
<feature type="region of interest" description="Disordered" evidence="4">
    <location>
        <begin position="326"/>
        <end position="371"/>
    </location>
</feature>
<feature type="compositionally biased region" description="Polar residues" evidence="4">
    <location>
        <begin position="326"/>
        <end position="340"/>
    </location>
</feature>
<feature type="compositionally biased region" description="Basic and acidic residues" evidence="4">
    <location>
        <begin position="352"/>
        <end position="363"/>
    </location>
</feature>
<feature type="modified residue" description="Phosphoserine" evidence="12">
    <location>
        <position position="10"/>
    </location>
</feature>
<feature type="modified residue" description="Phosphoserine" evidence="12">
    <location>
        <position position="11"/>
    </location>
</feature>
<feature type="splice variant" id="VSP_007460" description="In isoform 2." evidence="10">
    <original>I</original>
    <variation>C</variation>
    <location>
        <position position="298"/>
    </location>
</feature>
<feature type="splice variant" id="VSP_007461" description="In isoform 2." evidence="10">
    <location>
        <begin position="299"/>
        <end position="371"/>
    </location>
</feature>
<feature type="mutagenesis site" description="Does not abolish interaction with CDC42 and RHOQ." evidence="5">
    <original>IS</original>
    <variation>AA</variation>
    <location>
        <begin position="133"/>
        <end position="134"/>
    </location>
</feature>
<feature type="mutagenesis site" description="Abolishes interaction with RHOQ, but not the interaction with CDC42; when associated with A-139." evidence="5">
    <original>P</original>
    <variation>A</variation>
    <location>
        <position position="136"/>
    </location>
</feature>
<feature type="mutagenesis site" description="Abolishes interaction with RHOQ, but not the interaction with CDC42; when associated with A-136." evidence="5">
    <original>F</original>
    <variation>A</variation>
    <location>
        <position position="139"/>
    </location>
</feature>
<feature type="mutagenesis site" description="Strongly reduces interaction with PARD3. Does not abolish interaction with CDC42 and RHOQ." evidence="5">
    <original>KPLG</original>
    <variation>AAAA</variation>
    <location>
        <begin position="167"/>
        <end position="170"/>
    </location>
</feature>
<feature type="mutagenesis site" description="Prevents interaction with PALS1." evidence="9">
    <original>M</original>
    <variation>W</variation>
    <location>
        <position position="235"/>
    </location>
</feature>
<feature type="sequence conflict" description="In Ref. 4; AAH25147." evidence="11" ref="4">
    <original>C</original>
    <variation>W</variation>
    <location>
        <position position="13"/>
    </location>
</feature>
<feature type="sequence conflict" description="In Ref. 1; AAF71528." evidence="11" ref="1">
    <original>L</original>
    <variation>P</variation>
    <location>
        <position position="70"/>
    </location>
</feature>
<feature type="sequence conflict" description="In Ref. 1; AAF71528." evidence="11" ref="1">
    <original>Y</original>
    <variation>C</variation>
    <location>
        <position position="161"/>
    </location>
</feature>
<feature type="strand" evidence="13">
    <location>
        <begin position="137"/>
        <end position="146"/>
    </location>
</feature>
<feature type="strand" evidence="13">
    <location>
        <begin position="156"/>
        <end position="160"/>
    </location>
</feature>
<feature type="strand" evidence="13">
    <location>
        <begin position="171"/>
        <end position="182"/>
    </location>
</feature>
<feature type="strand" evidence="13">
    <location>
        <begin position="185"/>
        <end position="197"/>
    </location>
</feature>
<feature type="helix" evidence="13">
    <location>
        <begin position="202"/>
        <end position="206"/>
    </location>
</feature>
<feature type="strand" evidence="13">
    <location>
        <begin position="214"/>
        <end position="218"/>
    </location>
</feature>
<feature type="strand" evidence="13">
    <location>
        <begin position="221"/>
        <end position="223"/>
    </location>
</feature>
<feature type="helix" evidence="13">
    <location>
        <begin position="228"/>
        <end position="237"/>
    </location>
</feature>
<feature type="turn" evidence="13">
    <location>
        <begin position="238"/>
        <end position="240"/>
    </location>
</feature>
<feature type="strand" evidence="13">
    <location>
        <begin position="241"/>
        <end position="247"/>
    </location>
</feature>
<feature type="strand" evidence="14">
    <location>
        <begin position="368"/>
        <end position="370"/>
    </location>
</feature>
<evidence type="ECO:0000250" key="1"/>
<evidence type="ECO:0000255" key="2">
    <source>
        <dbReference type="PROSITE-ProRule" id="PRU00143"/>
    </source>
</evidence>
<evidence type="ECO:0000255" key="3">
    <source>
        <dbReference type="PROSITE-ProRule" id="PRU01081"/>
    </source>
</evidence>
<evidence type="ECO:0000256" key="4">
    <source>
        <dbReference type="SAM" id="MobiDB-lite"/>
    </source>
</evidence>
<evidence type="ECO:0000269" key="5">
    <source>
    </source>
</evidence>
<evidence type="ECO:0000269" key="6">
    <source>
    </source>
</evidence>
<evidence type="ECO:0000269" key="7">
    <source>
    </source>
</evidence>
<evidence type="ECO:0000269" key="8">
    <source>
    </source>
</evidence>
<evidence type="ECO:0000269" key="9">
    <source>
    </source>
</evidence>
<evidence type="ECO:0000303" key="10">
    <source>
    </source>
</evidence>
<evidence type="ECO:0000305" key="11"/>
<evidence type="ECO:0007744" key="12">
    <source>
    </source>
</evidence>
<evidence type="ECO:0007829" key="13">
    <source>
        <dbReference type="PDB" id="1NF3"/>
    </source>
</evidence>
<evidence type="ECO:0007829" key="14">
    <source>
        <dbReference type="PDB" id="6JUE"/>
    </source>
</evidence>
<sequence length="371" mass="41067">MNRGHRHGASSGCLGTMEVKSKFGAEFRRFSLERSKPGKFEEFYGLLQHVHKIPNVDVLVGYADIHGDLLPINNDDNYHKAVSTANPLLRIFIQKKEEADYSAFGTDTLIRKKNMLSNVLRPDNHRKKPHIVISMPQDFRPVSSIIDVDILPETHRRVRLYKYGTEKPLGFYIRDGSSVRVTPHGLEKVPGIFISRLVPGGLAQSTGLLAVNDEVLEVNGIEVSGKSLDQVTDMMIANSRNLIITVRPANQRNNVVRNSRTSGSSSQSTDNSLLGFPQQVEASFEPEDQDSDEDDIIIEDSGEPQQIPKATPAQSLESLTQIELSFESGQNGFSPPQDTSLVPVPGSLDTELESRAPDQKLLEEDGTIITL</sequence>
<gene>
    <name type="primary">Pard6b</name>
    <name type="synonym">Par6b</name>
</gene>
<proteinExistence type="evidence at protein level"/>
<keyword id="KW-0002">3D-structure</keyword>
<keyword id="KW-0025">Alternative splicing</keyword>
<keyword id="KW-0131">Cell cycle</keyword>
<keyword id="KW-0132">Cell division</keyword>
<keyword id="KW-0965">Cell junction</keyword>
<keyword id="KW-1003">Cell membrane</keyword>
<keyword id="KW-0963">Cytoplasm</keyword>
<keyword id="KW-0472">Membrane</keyword>
<keyword id="KW-0597">Phosphoprotein</keyword>
<keyword id="KW-1185">Reference proteome</keyword>
<keyword id="KW-0796">Tight junction</keyword>
<reference key="1">
    <citation type="journal article" date="2000" name="Nat. Cell Biol.">
        <title>The cell-polarity protein Par6 links Par3 and atypical protein kinase C to Cdc42.</title>
        <authorList>
            <person name="Joberty G."/>
            <person name="Petersen C."/>
            <person name="Gao L."/>
            <person name="Macara I.G."/>
        </authorList>
    </citation>
    <scope>NUCLEOTIDE SEQUENCE [MRNA] (ISOFORM 1)</scope>
    <scope>FUNCTION</scope>
    <scope>INTERACTION WITH PARD3; PRKCI; PRKCZ; RHOQ AND CDC42</scope>
    <scope>SUBUNIT OF A COMPLEX CONTAINING CDC42; PARD3 AND PRKCI</scope>
    <scope>MUTAGENESIS OF 133-ILE-SER-134; PRO-136; PHE-139 AND 167-LYS--GLY-170</scope>
    <source>
        <tissue>Embryo</tissue>
    </source>
</reference>
<reference key="2">
    <citation type="journal article" date="2009" name="PLoS Biol.">
        <title>Lineage-specific biology revealed by a finished genome assembly of the mouse.</title>
        <authorList>
            <person name="Church D.M."/>
            <person name="Goodstadt L."/>
            <person name="Hillier L.W."/>
            <person name="Zody M.C."/>
            <person name="Goldstein S."/>
            <person name="She X."/>
            <person name="Bult C.J."/>
            <person name="Agarwala R."/>
            <person name="Cherry J.L."/>
            <person name="DiCuccio M."/>
            <person name="Hlavina W."/>
            <person name="Kapustin Y."/>
            <person name="Meric P."/>
            <person name="Maglott D."/>
            <person name="Birtle Z."/>
            <person name="Marques A.C."/>
            <person name="Graves T."/>
            <person name="Zhou S."/>
            <person name="Teague B."/>
            <person name="Potamousis K."/>
            <person name="Churas C."/>
            <person name="Place M."/>
            <person name="Herschleb J."/>
            <person name="Runnheim R."/>
            <person name="Forrest D."/>
            <person name="Amos-Landgraf J."/>
            <person name="Schwartz D.C."/>
            <person name="Cheng Z."/>
            <person name="Lindblad-Toh K."/>
            <person name="Eichler E.E."/>
            <person name="Ponting C.P."/>
        </authorList>
    </citation>
    <scope>NUCLEOTIDE SEQUENCE [LARGE SCALE GENOMIC DNA]</scope>
    <source>
        <strain>C57BL/6J</strain>
    </source>
</reference>
<reference key="3">
    <citation type="submission" date="2005-07" db="EMBL/GenBank/DDBJ databases">
        <authorList>
            <person name="Mural R.J."/>
            <person name="Adams M.D."/>
            <person name="Myers E.W."/>
            <person name="Smith H.O."/>
            <person name="Venter J.C."/>
        </authorList>
    </citation>
    <scope>NUCLEOTIDE SEQUENCE [LARGE SCALE GENOMIC DNA]</scope>
</reference>
<reference key="4">
    <citation type="journal article" date="2004" name="Genome Res.">
        <title>The status, quality, and expansion of the NIH full-length cDNA project: the Mammalian Gene Collection (MGC).</title>
        <authorList>
            <consortium name="The MGC Project Team"/>
        </authorList>
    </citation>
    <scope>NUCLEOTIDE SEQUENCE [LARGE SCALE MRNA] (ISOFORM 2)</scope>
    <source>
        <tissue>Mammary gland</tissue>
    </source>
</reference>
<reference key="5">
    <citation type="journal article" date="2002" name="Curr. Biol.">
        <title>Assembly of epithelial tight junctions is negatively regulated by Par6.</title>
        <authorList>
            <person name="Gao L."/>
            <person name="Joberty G."/>
            <person name="Macara I.G."/>
        </authorList>
    </citation>
    <scope>FUNCTION</scope>
</reference>
<reference key="6">
    <citation type="journal article" date="2003" name="Nat. Cell Biol.">
        <title>Direct interaction of two polarity complexes implicated in epithelial tight junction assembly.</title>
        <authorList>
            <person name="Hurd T.W."/>
            <person name="Gao L."/>
            <person name="Roh M.H."/>
            <person name="Macara I.G."/>
            <person name="Margolis B."/>
        </authorList>
    </citation>
    <scope>INTERACTION WITH PALS1</scope>
    <scope>DOMAIN</scope>
</reference>
<reference key="7">
    <citation type="journal article" date="2004" name="J. Biol. Chem.">
        <title>Tight junction protein Par6 interacts with an evolutionarily conserved region in the amino terminus of PALS1/stardust.</title>
        <authorList>
            <person name="Wang Q."/>
            <person name="Hurd T.W."/>
            <person name="Margolis B."/>
        </authorList>
    </citation>
    <scope>INTERACTION WITH PALS1</scope>
    <scope>MUTAGENESIS OF MET-235</scope>
</reference>
<reference key="8">
    <citation type="journal article" date="2010" name="Cell">
        <title>A tissue-specific atlas of mouse protein phosphorylation and expression.</title>
        <authorList>
            <person name="Huttlin E.L."/>
            <person name="Jedrychowski M.P."/>
            <person name="Elias J.E."/>
            <person name="Goswami T."/>
            <person name="Rad R."/>
            <person name="Beausoleil S.A."/>
            <person name="Villen J."/>
            <person name="Haas W."/>
            <person name="Sowa M.E."/>
            <person name="Gygi S.P."/>
        </authorList>
    </citation>
    <scope>PHOSPHORYLATION [LARGE SCALE ANALYSIS] AT SER-10 AND SER-11</scope>
    <scope>IDENTIFICATION BY MASS SPECTROMETRY [LARGE SCALE ANALYSIS]</scope>
    <source>
        <tissue>Kidney</tissue>
        <tissue>Lung</tissue>
        <tissue>Testis</tissue>
    </source>
</reference>
<reference key="9">
    <citation type="journal article" date="2003" name="EMBO J.">
        <title>Structure of Cdc42 in a complex with the GTPase-binding domain of the cell polarity protein, Par6.</title>
        <authorList>
            <person name="Garrard S.M."/>
            <person name="Capaldo C.T."/>
            <person name="Gao L."/>
            <person name="Rosen M.K."/>
            <person name="Macara I.G."/>
            <person name="Tomchick D.R."/>
        </authorList>
    </citation>
    <scope>X-RAY CRYSTALLOGRAPHY (2.1 ANGSTROMS) OF 112-252 IN COMPLEX WITH CDC42</scope>
</reference>
<comment type="function">
    <text evidence="5 6">Adapter protein involved in asymmetrical cell division and cell polarization processes. Probably involved in formation of epithelial tight junctions. Association with PARD3 may prevent the interaction of PARD3 with F11R/JAM1, thereby preventing tight junction assembly. The PARD6-PARD3 complex links GTP-bound Rho small GTPases to atypical protein kinase C proteins.</text>
</comment>
<comment type="subunit">
    <text evidence="1 5 7 8 9">Interacts with PARD3. Interacts with GTP-bound forms of CDC42, RHOQ/TC10 and RAC1. Interacts with the N-terminal part of PRKCI and PRKCZ. Part of a complex with PARD3, CDC42 or RAC1 and PRKCI or PRKCZ. Part of a complex with LLGL1 and PRKCI. Interacts with ALS2CR19. Interacts with ECT2 (By similarity). Interacts with PALS1.</text>
</comment>
<comment type="interaction">
    <interactant intactId="EBI-81861">
        <id>Q9JK83</id>
    </interactant>
    <interactant intactId="EBI-81752">
        <id>P60953</id>
        <label>CDC42</label>
    </interactant>
    <organismsDiffer>true</organismsDiffer>
    <experiments>6</experiments>
</comment>
<comment type="interaction">
    <interactant intactId="EBI-81861">
        <id>Q9JK83</id>
    </interactant>
    <interactant intactId="EBI-81968">
        <id>Q8TEW0</id>
        <label>PARD3</label>
    </interactant>
    <organismsDiffer>true</organismsDiffer>
    <experiments>3</experiments>
</comment>
<comment type="subcellular location">
    <subcellularLocation>
        <location>Cytoplasm</location>
    </subcellularLocation>
    <subcellularLocation>
        <location>Cell membrane</location>
    </subcellularLocation>
    <subcellularLocation>
        <location>Cell junction</location>
        <location>Tight junction</location>
    </subcellularLocation>
    <text>Colocalizes with active form of CDC42 or RAC1 at membrane ruffles. Also localizes to tight junctions.</text>
</comment>
<comment type="alternative products">
    <event type="alternative splicing"/>
    <isoform>
        <id>Q9JK83-1</id>
        <name>1</name>
        <sequence type="displayed"/>
    </isoform>
    <isoform>
        <id>Q9JK83-2</id>
        <name>2</name>
        <sequence type="described" ref="VSP_007460 VSP_007461"/>
    </isoform>
</comment>
<comment type="tissue specificity">
    <text>Expressed in pancreas and in both adult and fetal kidney. Weakly expressed in placenta and lung. Not expressed in other tissues.</text>
</comment>
<comment type="domain">
    <text evidence="7">The pseudo-CRIB domain together with the PDZ domain is required for the interaction with Rho small GTPases.</text>
</comment>
<comment type="domain">
    <text evidence="7">The PDZ domain mediates the interaction with PALS1.</text>
</comment>
<comment type="similarity">
    <text evidence="11">Belongs to the PAR6 family.</text>
</comment>
<name>PAR6B_MOUSE</name>